<protein>
    <recommendedName>
        <fullName evidence="7">Propionyl-CoA carboxylase beta chain</fullName>
        <shortName evidence="7">PCCase</shortName>
        <ecNumber evidence="5">6.4.1.3</ecNumber>
    </recommendedName>
    <alternativeName>
        <fullName evidence="7">Propanoyl-CoA:carbon dioxide ligase</fullName>
    </alternativeName>
</protein>
<accession>Q3J4E3</accession>
<comment type="catalytic activity">
    <reaction evidence="5">
        <text>propanoyl-CoA + hydrogencarbonate + ATP = (S)-methylmalonyl-CoA + ADP + phosphate + H(+)</text>
        <dbReference type="Rhea" id="RHEA:23720"/>
        <dbReference type="ChEBI" id="CHEBI:15378"/>
        <dbReference type="ChEBI" id="CHEBI:17544"/>
        <dbReference type="ChEBI" id="CHEBI:30616"/>
        <dbReference type="ChEBI" id="CHEBI:43474"/>
        <dbReference type="ChEBI" id="CHEBI:57327"/>
        <dbReference type="ChEBI" id="CHEBI:57392"/>
        <dbReference type="ChEBI" id="CHEBI:456216"/>
        <dbReference type="EC" id="6.4.1.3"/>
    </reaction>
</comment>
<comment type="pathway">
    <text evidence="8">Metabolic intermediate metabolism; propanoyl-CoA degradation; succinyl-CoA from propanoyl-CoA: step 1/3.</text>
</comment>
<comment type="subunit">
    <text evidence="1">Probably a dodecamer composed of six biotin-containing alpha subunits and six beta subunits.</text>
</comment>
<comment type="induction">
    <text evidence="5">Transcriptionally regulated by PccR. Expression is dependent on the carbon source supplied: transcript levels from acetate- and propionate-grown cells increase 6- and 10-fold, respectively, when compared with succinate-grown cells.</text>
</comment>
<comment type="similarity">
    <text evidence="7">Belongs to the AccD/PCCB family.</text>
</comment>
<reference key="1">
    <citation type="submission" date="2005-09" db="EMBL/GenBank/DDBJ databases">
        <title>Complete sequence of chromosome 1 of Rhodobacter sphaeroides 2.4.1.</title>
        <authorList>
            <person name="Copeland A."/>
            <person name="Lucas S."/>
            <person name="Lapidus A."/>
            <person name="Barry K."/>
            <person name="Detter J.C."/>
            <person name="Glavina T."/>
            <person name="Hammon N."/>
            <person name="Israni S."/>
            <person name="Pitluck S."/>
            <person name="Richardson P."/>
            <person name="Mackenzie C."/>
            <person name="Choudhary M."/>
            <person name="Larimer F."/>
            <person name="Hauser L.J."/>
            <person name="Land M."/>
            <person name="Donohue T.J."/>
            <person name="Kaplan S."/>
        </authorList>
    </citation>
    <scope>NUCLEOTIDE SEQUENCE [LARGE SCALE GENOMIC DNA]</scope>
    <source>
        <strain evidence="10">ATCC 17023 / DSM 158 / JCM 6121 / CCUG 31486 / LMG 2827 / NBRC 12203 / NCIMB 8253 / ATH 2.4.1.</strain>
    </source>
</reference>
<reference key="2">
    <citation type="journal article" date="2015" name="J. Bacteriol.">
        <title>Transcriptional regulation by the short-chain fatty acyl coenzyme A regulator (ScfR) PccR controls propionyl coenzyme A assimilation by Rhodobacter sphaeroides.</title>
        <authorList>
            <person name="Carter M.S."/>
            <person name="Alber B.E."/>
        </authorList>
    </citation>
    <scope>CATALYTIC ACTIVITY</scope>
    <scope>PATHWAY</scope>
    <scope>INDUCTION</scope>
    <source>
        <strain>ATCC 17023 / DSM 158 / JCM 6121 / CCUG 31486 / LMG 2827 / NBRC 12203 / NCIMB 8253 / ATH 2.4.1.</strain>
    </source>
</reference>
<organism>
    <name type="scientific">Cereibacter sphaeroides (strain ATCC 17023 / DSM 158 / JCM 6121 / CCUG 31486 / LMG 2827 / NBRC 12203 / NCIMB 8253 / ATH 2.4.1.)</name>
    <name type="common">Rhodobacter sphaeroides</name>
    <dbReference type="NCBI Taxonomy" id="272943"/>
    <lineage>
        <taxon>Bacteria</taxon>
        <taxon>Pseudomonadati</taxon>
        <taxon>Pseudomonadota</taxon>
        <taxon>Alphaproteobacteria</taxon>
        <taxon>Rhodobacterales</taxon>
        <taxon>Paracoccaceae</taxon>
        <taxon>Cereibacter</taxon>
    </lineage>
</organism>
<feature type="chain" id="PRO_0000434654" description="Propionyl-CoA carboxylase beta chain">
    <location>
        <begin position="1"/>
        <end position="510"/>
    </location>
</feature>
<feature type="domain" description="CoA carboxyltransferase N-terminal" evidence="2">
    <location>
        <begin position="1"/>
        <end position="257"/>
    </location>
</feature>
<feature type="domain" description="CoA carboxyltransferase C-terminal" evidence="3">
    <location>
        <begin position="264"/>
        <end position="504"/>
    </location>
</feature>
<feature type="region of interest" description="Carboxyltransferase" evidence="4">
    <location>
        <begin position="1"/>
        <end position="504"/>
    </location>
</feature>
<sequence>MKDILQELENRRAIARAGGGQRRVEAQHKRGKLTARERIELLLDEGSFEEFDMFVRHRCTDFGMQDDRPAGDGVVTGWGTINGRMVYVFSQDFTVFGGSLSETHAQKICKIMDMAMQNGAPVIGLNDSGGARIQEGVASLAGYADVFQRNIMASGVIPQISVIMGPCAGGAVYSPAMTDFIFMVRDTSYMFVTGPDVVKTVTNEVVTAEELGGASTHTKKSSVADGAFENDVEALYEIRRLVDFLPLSNRTPAPVRPFFDDVARIEDSLDTLIPDNPNQPYDMKELILKIADEADFYEIQKDFAANIITGFIRLEGQTVGVVANQPMVLAGCLDIDSSRKAARFVRFCDAFNIPILTLVDVPGFLPGTGQEYGGVIKHGAKLLFAYGEATVPKVTVITRKAYGGAYDVMASKHLRGDFNYAWPTAEIAVMGAKGATEILYRSELGDKEKIAARAKEYEDRFANPFVAAERGFIDEVIMPHSTRRRVSKAFASLRNKKLANPWKKHDNIPL</sequence>
<evidence type="ECO:0000250" key="1"/>
<evidence type="ECO:0000255" key="2">
    <source>
        <dbReference type="PROSITE-ProRule" id="PRU01136"/>
    </source>
</evidence>
<evidence type="ECO:0000255" key="3">
    <source>
        <dbReference type="PROSITE-ProRule" id="PRU01137"/>
    </source>
</evidence>
<evidence type="ECO:0000255" key="4">
    <source>
        <dbReference type="PROSITE-ProRule" id="PRU01138"/>
    </source>
</evidence>
<evidence type="ECO:0000269" key="5">
    <source>
    </source>
</evidence>
<evidence type="ECO:0000303" key="6">
    <source>
    </source>
</evidence>
<evidence type="ECO:0000305" key="7"/>
<evidence type="ECO:0000305" key="8">
    <source>
    </source>
</evidence>
<evidence type="ECO:0000312" key="9">
    <source>
        <dbReference type="EMBL" id="ABA78341.1"/>
    </source>
</evidence>
<evidence type="ECO:0000312" key="10">
    <source>
        <dbReference type="Proteomes" id="UP000002703"/>
    </source>
</evidence>
<name>PCCB_CERS4</name>
<gene>
    <name evidence="6" type="primary">pccB</name>
    <name evidence="7" type="ordered locus">RHOS4_07730</name>
    <name evidence="9" type="ORF">RSP_2189</name>
</gene>
<dbReference type="EC" id="6.4.1.3" evidence="5"/>
<dbReference type="EMBL" id="CP000143">
    <property type="protein sequence ID" value="ABA78341.1"/>
    <property type="molecule type" value="Genomic_DNA"/>
</dbReference>
<dbReference type="RefSeq" id="WP_002719342.1">
    <property type="nucleotide sequence ID" value="NZ_CP030271.1"/>
</dbReference>
<dbReference type="RefSeq" id="YP_352242.1">
    <property type="nucleotide sequence ID" value="NC_007493.2"/>
</dbReference>
<dbReference type="SMR" id="Q3J4E3"/>
<dbReference type="STRING" id="272943.RSP_2189"/>
<dbReference type="EnsemblBacteria" id="ABA78341">
    <property type="protein sequence ID" value="ABA78341"/>
    <property type="gene ID" value="RSP_2189"/>
</dbReference>
<dbReference type="GeneID" id="3719659"/>
<dbReference type="KEGG" id="rsp:RSP_2189"/>
<dbReference type="PATRIC" id="fig|272943.9.peg.1085"/>
<dbReference type="eggNOG" id="COG4799">
    <property type="taxonomic scope" value="Bacteria"/>
</dbReference>
<dbReference type="OrthoDB" id="9803706at2"/>
<dbReference type="PhylomeDB" id="Q3J4E3"/>
<dbReference type="BioCyc" id="MetaCyc:MONOMER-13590"/>
<dbReference type="UniPathway" id="UPA00945">
    <property type="reaction ID" value="UER00908"/>
</dbReference>
<dbReference type="Proteomes" id="UP000002703">
    <property type="component" value="Chromosome 1"/>
</dbReference>
<dbReference type="GO" id="GO:0005524">
    <property type="term" value="F:ATP binding"/>
    <property type="evidence" value="ECO:0007669"/>
    <property type="project" value="UniProtKB-KW"/>
</dbReference>
<dbReference type="GO" id="GO:0004658">
    <property type="term" value="F:propionyl-CoA carboxylase activity"/>
    <property type="evidence" value="ECO:0007669"/>
    <property type="project" value="UniProtKB-EC"/>
</dbReference>
<dbReference type="FunFam" id="3.90.226.10:FF:000017">
    <property type="entry name" value="Propionyl-CoA carboxylase subunit beta 5"/>
    <property type="match status" value="1"/>
</dbReference>
<dbReference type="FunFam" id="3.90.226.10:FF:000016">
    <property type="entry name" value="Propionyl-CoA carboxylase, beta subunit"/>
    <property type="match status" value="1"/>
</dbReference>
<dbReference type="Gene3D" id="3.90.226.10">
    <property type="entry name" value="2-enoyl-CoA Hydratase, Chain A, domain 1"/>
    <property type="match status" value="2"/>
</dbReference>
<dbReference type="InterPro" id="IPR051047">
    <property type="entry name" value="AccD/PCCB"/>
</dbReference>
<dbReference type="InterPro" id="IPR034733">
    <property type="entry name" value="AcCoA_carboxyl_beta"/>
</dbReference>
<dbReference type="InterPro" id="IPR029045">
    <property type="entry name" value="ClpP/crotonase-like_dom_sf"/>
</dbReference>
<dbReference type="InterPro" id="IPR011763">
    <property type="entry name" value="COA_CT_C"/>
</dbReference>
<dbReference type="InterPro" id="IPR011762">
    <property type="entry name" value="COA_CT_N"/>
</dbReference>
<dbReference type="PANTHER" id="PTHR43842">
    <property type="entry name" value="PROPIONYL-COA CARBOXYLASE BETA CHAIN"/>
    <property type="match status" value="1"/>
</dbReference>
<dbReference type="PANTHER" id="PTHR43842:SF2">
    <property type="entry name" value="PROPIONYL-COA CARBOXYLASE BETA CHAIN, MITOCHONDRIAL"/>
    <property type="match status" value="1"/>
</dbReference>
<dbReference type="Pfam" id="PF01039">
    <property type="entry name" value="Carboxyl_trans"/>
    <property type="match status" value="1"/>
</dbReference>
<dbReference type="SUPFAM" id="SSF52096">
    <property type="entry name" value="ClpP/crotonase"/>
    <property type="match status" value="2"/>
</dbReference>
<dbReference type="PROSITE" id="PS50989">
    <property type="entry name" value="COA_CT_CTER"/>
    <property type="match status" value="1"/>
</dbReference>
<dbReference type="PROSITE" id="PS50980">
    <property type="entry name" value="COA_CT_NTER"/>
    <property type="match status" value="1"/>
</dbReference>
<keyword id="KW-0067">ATP-binding</keyword>
<keyword id="KW-0436">Ligase</keyword>
<keyword id="KW-0547">Nucleotide-binding</keyword>
<keyword id="KW-1185">Reference proteome</keyword>
<proteinExistence type="evidence at protein level"/>